<sequence>MLDKEVLVIGAGLAGSEAAWQLANSGVPVKLVEMRPIKSTPAHHTSEFGELVCSNSFGALSPDRAAGLLQKELRFFKSLIVQTADKFAVPAGGALAVDRSKFSYALTEQLSNHPLVEIKRFEQLDIPSEENITILATGPLTADDLSYKIQDFTGIDDCHFFDAASPIIYGDSIDQEIVFKASRYDKGDPAYLNCPMDENKYIHFRNELIEGEQANLKDFEKESANFFEACLPIEEIARRGVDTMRYGPLKSIGLWNPKWGDLFDRENRLKKRPHAVVQLRKEDLEGKLLNMVGFQTNLKWSEQKRIFRMIPGLEKAEFVRFGVMHRNTFLESPKLLLPTLQFMKRENLFAAGQITGTEGYAAAAAGGLLAGINASLLAKGKKPVSFPDESMIGSLMNFISNKNQILSNQKKNKFQPMPASFGLVPELTKRIKDKRLRYKAYQERSTEALNDFKNKLDSCFDKDHLLSKIY</sequence>
<reference key="1">
    <citation type="journal article" date="2007" name="PLoS Genet.">
        <title>Patterns and implications of gene gain and loss in the evolution of Prochlorococcus.</title>
        <authorList>
            <person name="Kettler G.C."/>
            <person name="Martiny A.C."/>
            <person name="Huang K."/>
            <person name="Zucker J."/>
            <person name="Coleman M.L."/>
            <person name="Rodrigue S."/>
            <person name="Chen F."/>
            <person name="Lapidus A."/>
            <person name="Ferriera S."/>
            <person name="Johnson J."/>
            <person name="Steglich C."/>
            <person name="Church G.M."/>
            <person name="Richardson P."/>
            <person name="Chisholm S.W."/>
        </authorList>
    </citation>
    <scope>NUCLEOTIDE SEQUENCE [LARGE SCALE GENOMIC DNA]</scope>
    <source>
        <strain>MIT 9301</strain>
    </source>
</reference>
<proteinExistence type="inferred from homology"/>
<protein>
    <recommendedName>
        <fullName evidence="1">Methylenetetrahydrofolate--tRNA-(uracil-5-)-methyltransferase TrmFO</fullName>
        <ecNumber evidence="1">2.1.1.74</ecNumber>
    </recommendedName>
    <alternativeName>
        <fullName evidence="1">Folate-dependent tRNA (uracil-5-)-methyltransferase</fullName>
    </alternativeName>
    <alternativeName>
        <fullName evidence="1">Folate-dependent tRNA(M-5-U54)-methyltransferase</fullName>
    </alternativeName>
</protein>
<feature type="chain" id="PRO_0000346377" description="Methylenetetrahydrofolate--tRNA-(uracil-5-)-methyltransferase TrmFO">
    <location>
        <begin position="1"/>
        <end position="470"/>
    </location>
</feature>
<feature type="binding site" evidence="1">
    <location>
        <begin position="10"/>
        <end position="15"/>
    </location>
    <ligand>
        <name>FAD</name>
        <dbReference type="ChEBI" id="CHEBI:57692"/>
    </ligand>
</feature>
<organism>
    <name type="scientific">Prochlorococcus marinus (strain MIT 9301)</name>
    <dbReference type="NCBI Taxonomy" id="167546"/>
    <lineage>
        <taxon>Bacteria</taxon>
        <taxon>Bacillati</taxon>
        <taxon>Cyanobacteriota</taxon>
        <taxon>Cyanophyceae</taxon>
        <taxon>Synechococcales</taxon>
        <taxon>Prochlorococcaceae</taxon>
        <taxon>Prochlorococcus</taxon>
    </lineage>
</organism>
<accession>A3PDM1</accession>
<name>TRMFO_PROM0</name>
<comment type="function">
    <text evidence="1">Catalyzes the folate-dependent formation of 5-methyl-uridine at position 54 (M-5-U54) in all tRNAs.</text>
</comment>
<comment type="catalytic activity">
    <reaction evidence="1">
        <text>uridine(54) in tRNA + (6R)-5,10-methylene-5,6,7,8-tetrahydrofolate + NADH + H(+) = 5-methyluridine(54) in tRNA + (6S)-5,6,7,8-tetrahydrofolate + NAD(+)</text>
        <dbReference type="Rhea" id="RHEA:16873"/>
        <dbReference type="Rhea" id="RHEA-COMP:10167"/>
        <dbReference type="Rhea" id="RHEA-COMP:10193"/>
        <dbReference type="ChEBI" id="CHEBI:15378"/>
        <dbReference type="ChEBI" id="CHEBI:15636"/>
        <dbReference type="ChEBI" id="CHEBI:57453"/>
        <dbReference type="ChEBI" id="CHEBI:57540"/>
        <dbReference type="ChEBI" id="CHEBI:57945"/>
        <dbReference type="ChEBI" id="CHEBI:65315"/>
        <dbReference type="ChEBI" id="CHEBI:74447"/>
        <dbReference type="EC" id="2.1.1.74"/>
    </reaction>
</comment>
<comment type="catalytic activity">
    <reaction evidence="1">
        <text>uridine(54) in tRNA + (6R)-5,10-methylene-5,6,7,8-tetrahydrofolate + NADPH + H(+) = 5-methyluridine(54) in tRNA + (6S)-5,6,7,8-tetrahydrofolate + NADP(+)</text>
        <dbReference type="Rhea" id="RHEA:62372"/>
        <dbReference type="Rhea" id="RHEA-COMP:10167"/>
        <dbReference type="Rhea" id="RHEA-COMP:10193"/>
        <dbReference type="ChEBI" id="CHEBI:15378"/>
        <dbReference type="ChEBI" id="CHEBI:15636"/>
        <dbReference type="ChEBI" id="CHEBI:57453"/>
        <dbReference type="ChEBI" id="CHEBI:57783"/>
        <dbReference type="ChEBI" id="CHEBI:58349"/>
        <dbReference type="ChEBI" id="CHEBI:65315"/>
        <dbReference type="ChEBI" id="CHEBI:74447"/>
        <dbReference type="EC" id="2.1.1.74"/>
    </reaction>
</comment>
<comment type="cofactor">
    <cofactor evidence="1">
        <name>FAD</name>
        <dbReference type="ChEBI" id="CHEBI:57692"/>
    </cofactor>
</comment>
<comment type="subcellular location">
    <subcellularLocation>
        <location evidence="1">Cytoplasm</location>
    </subcellularLocation>
</comment>
<comment type="similarity">
    <text evidence="1">Belongs to the MnmG family. TrmFO subfamily.</text>
</comment>
<evidence type="ECO:0000255" key="1">
    <source>
        <dbReference type="HAMAP-Rule" id="MF_01037"/>
    </source>
</evidence>
<dbReference type="EC" id="2.1.1.74" evidence="1"/>
<dbReference type="EMBL" id="CP000576">
    <property type="protein sequence ID" value="ABO17846.1"/>
    <property type="molecule type" value="Genomic_DNA"/>
</dbReference>
<dbReference type="RefSeq" id="WP_011863173.1">
    <property type="nucleotide sequence ID" value="NC_009091.1"/>
</dbReference>
<dbReference type="SMR" id="A3PDM1"/>
<dbReference type="STRING" id="167546.P9301_12231"/>
<dbReference type="KEGG" id="pmg:P9301_12231"/>
<dbReference type="eggNOG" id="COG1206">
    <property type="taxonomic scope" value="Bacteria"/>
</dbReference>
<dbReference type="HOGENOM" id="CLU_033057_1_0_3"/>
<dbReference type="OrthoDB" id="9803114at2"/>
<dbReference type="Proteomes" id="UP000001430">
    <property type="component" value="Chromosome"/>
</dbReference>
<dbReference type="GO" id="GO:0005829">
    <property type="term" value="C:cytosol"/>
    <property type="evidence" value="ECO:0007669"/>
    <property type="project" value="TreeGrafter"/>
</dbReference>
<dbReference type="GO" id="GO:0050660">
    <property type="term" value="F:flavin adenine dinucleotide binding"/>
    <property type="evidence" value="ECO:0007669"/>
    <property type="project" value="UniProtKB-UniRule"/>
</dbReference>
<dbReference type="GO" id="GO:0047151">
    <property type="term" value="F:tRNA (uracil(54)-C5)-methyltransferase activity, 5,10-methylenetetrahydrofolate-dependent"/>
    <property type="evidence" value="ECO:0007669"/>
    <property type="project" value="UniProtKB-UniRule"/>
</dbReference>
<dbReference type="GO" id="GO:0030488">
    <property type="term" value="P:tRNA methylation"/>
    <property type="evidence" value="ECO:0007669"/>
    <property type="project" value="TreeGrafter"/>
</dbReference>
<dbReference type="GO" id="GO:0002098">
    <property type="term" value="P:tRNA wobble uridine modification"/>
    <property type="evidence" value="ECO:0007669"/>
    <property type="project" value="TreeGrafter"/>
</dbReference>
<dbReference type="Gene3D" id="3.50.50.60">
    <property type="entry name" value="FAD/NAD(P)-binding domain"/>
    <property type="match status" value="2"/>
</dbReference>
<dbReference type="HAMAP" id="MF_01037">
    <property type="entry name" value="TrmFO"/>
    <property type="match status" value="1"/>
</dbReference>
<dbReference type="InterPro" id="IPR036188">
    <property type="entry name" value="FAD/NAD-bd_sf"/>
</dbReference>
<dbReference type="InterPro" id="IPR002218">
    <property type="entry name" value="MnmG-rel"/>
</dbReference>
<dbReference type="InterPro" id="IPR020595">
    <property type="entry name" value="MnmG-rel_CS"/>
</dbReference>
<dbReference type="InterPro" id="IPR040131">
    <property type="entry name" value="MnmG_N"/>
</dbReference>
<dbReference type="InterPro" id="IPR004417">
    <property type="entry name" value="TrmFO"/>
</dbReference>
<dbReference type="NCBIfam" id="TIGR00137">
    <property type="entry name" value="gid_trmFO"/>
    <property type="match status" value="1"/>
</dbReference>
<dbReference type="NCBIfam" id="NF003739">
    <property type="entry name" value="PRK05335.1"/>
    <property type="match status" value="1"/>
</dbReference>
<dbReference type="PANTHER" id="PTHR11806">
    <property type="entry name" value="GLUCOSE INHIBITED DIVISION PROTEIN A"/>
    <property type="match status" value="1"/>
</dbReference>
<dbReference type="PANTHER" id="PTHR11806:SF2">
    <property type="entry name" value="METHYLENETETRAHYDROFOLATE--TRNA-(URACIL-5-)-METHYLTRANSFERASE TRMFO"/>
    <property type="match status" value="1"/>
</dbReference>
<dbReference type="Pfam" id="PF01134">
    <property type="entry name" value="GIDA"/>
    <property type="match status" value="1"/>
</dbReference>
<dbReference type="SUPFAM" id="SSF51905">
    <property type="entry name" value="FAD/NAD(P)-binding domain"/>
    <property type="match status" value="1"/>
</dbReference>
<dbReference type="PROSITE" id="PS01281">
    <property type="entry name" value="GIDA_2"/>
    <property type="match status" value="1"/>
</dbReference>
<gene>
    <name evidence="1" type="primary">trmFO</name>
    <name type="ordered locus">P9301_12231</name>
</gene>
<keyword id="KW-0963">Cytoplasm</keyword>
<keyword id="KW-0274">FAD</keyword>
<keyword id="KW-0285">Flavoprotein</keyword>
<keyword id="KW-0489">Methyltransferase</keyword>
<keyword id="KW-0520">NAD</keyword>
<keyword id="KW-0521">NADP</keyword>
<keyword id="KW-1185">Reference proteome</keyword>
<keyword id="KW-0808">Transferase</keyword>
<keyword id="KW-0819">tRNA processing</keyword>